<comment type="function">
    <text evidence="1">RNaseP catalyzes the removal of the 5'-leader sequence from pre-tRNA to produce the mature 5'-terminus. It can also cleave other RNA substrates such as 4.5S RNA. The protein component plays an auxiliary but essential role in vivo by binding to the 5'-leader sequence and broadening the substrate specificity of the ribozyme.</text>
</comment>
<comment type="catalytic activity">
    <reaction evidence="1">
        <text>Endonucleolytic cleavage of RNA, removing 5'-extranucleotides from tRNA precursor.</text>
        <dbReference type="EC" id="3.1.26.5"/>
    </reaction>
</comment>
<comment type="subunit">
    <text evidence="1">Consists of a catalytic RNA component (M1 or rnpB) and a protein subunit.</text>
</comment>
<comment type="similarity">
    <text evidence="1">Belongs to the RnpA family.</text>
</comment>
<feature type="chain" id="PRO_0000198452" description="Ribonuclease P protein component">
    <location>
        <begin position="1"/>
        <end position="119"/>
    </location>
</feature>
<accession>Q6NE96</accession>
<organism>
    <name type="scientific">Corynebacterium diphtheriae (strain ATCC 700971 / NCTC 13129 / Biotype gravis)</name>
    <dbReference type="NCBI Taxonomy" id="257309"/>
    <lineage>
        <taxon>Bacteria</taxon>
        <taxon>Bacillati</taxon>
        <taxon>Actinomycetota</taxon>
        <taxon>Actinomycetes</taxon>
        <taxon>Mycobacteriales</taxon>
        <taxon>Corynebacteriaceae</taxon>
        <taxon>Corynebacterium</taxon>
    </lineage>
</organism>
<protein>
    <recommendedName>
        <fullName evidence="1">Ribonuclease P protein component</fullName>
        <shortName evidence="1">RNase P protein</shortName>
        <shortName evidence="1">RNaseP protein</shortName>
        <ecNumber evidence="1">3.1.26.5</ecNumber>
    </recommendedName>
    <alternativeName>
        <fullName evidence="1">Protein C5</fullName>
    </alternativeName>
</protein>
<gene>
    <name evidence="1" type="primary">rnpA</name>
    <name type="ordered locus">DIP2381</name>
</gene>
<proteinExistence type="inferred from homology"/>
<name>RNPA_CORDI</name>
<sequence length="119" mass="12893">MLPSQHKLSNSEQFRATIRKGKRAGRSTVVLHFYAEATAGNLATAGGPRFGLVVSKAVGNAVTRHRVSRQLRHVVIAMKDQFPASSHVVVRALPPAATASSEELRADVQAALDKLNRKR</sequence>
<evidence type="ECO:0000255" key="1">
    <source>
        <dbReference type="HAMAP-Rule" id="MF_00227"/>
    </source>
</evidence>
<keyword id="KW-0255">Endonuclease</keyword>
<keyword id="KW-0378">Hydrolase</keyword>
<keyword id="KW-0540">Nuclease</keyword>
<keyword id="KW-1185">Reference proteome</keyword>
<keyword id="KW-0694">RNA-binding</keyword>
<keyword id="KW-0819">tRNA processing</keyword>
<reference key="1">
    <citation type="journal article" date="2003" name="Nucleic Acids Res.">
        <title>The complete genome sequence and analysis of Corynebacterium diphtheriae NCTC13129.</title>
        <authorList>
            <person name="Cerdeno-Tarraga A.-M."/>
            <person name="Efstratiou A."/>
            <person name="Dover L.G."/>
            <person name="Holden M.T.G."/>
            <person name="Pallen M.J."/>
            <person name="Bentley S.D."/>
            <person name="Besra G.S."/>
            <person name="Churcher C.M."/>
            <person name="James K.D."/>
            <person name="De Zoysa A."/>
            <person name="Chillingworth T."/>
            <person name="Cronin A."/>
            <person name="Dowd L."/>
            <person name="Feltwell T."/>
            <person name="Hamlin N."/>
            <person name="Holroyd S."/>
            <person name="Jagels K."/>
            <person name="Moule S."/>
            <person name="Quail M.A."/>
            <person name="Rabbinowitsch E."/>
            <person name="Rutherford K.M."/>
            <person name="Thomson N.R."/>
            <person name="Unwin L."/>
            <person name="Whitehead S."/>
            <person name="Barrell B.G."/>
            <person name="Parkhill J."/>
        </authorList>
    </citation>
    <scope>NUCLEOTIDE SEQUENCE [LARGE SCALE GENOMIC DNA]</scope>
    <source>
        <strain>ATCC 700971 / NCTC 13129 / Biotype gravis</strain>
    </source>
</reference>
<dbReference type="EC" id="3.1.26.5" evidence="1"/>
<dbReference type="EMBL" id="BX248361">
    <property type="protein sequence ID" value="CAE50903.1"/>
    <property type="molecule type" value="Genomic_DNA"/>
</dbReference>
<dbReference type="RefSeq" id="WP_010935810.1">
    <property type="nucleotide sequence ID" value="NC_002935.2"/>
</dbReference>
<dbReference type="SMR" id="Q6NE96"/>
<dbReference type="STRING" id="257309.DIP2381"/>
<dbReference type="KEGG" id="cdi:DIP2381"/>
<dbReference type="HOGENOM" id="CLU_117179_4_1_11"/>
<dbReference type="Proteomes" id="UP000002198">
    <property type="component" value="Chromosome"/>
</dbReference>
<dbReference type="GO" id="GO:0030677">
    <property type="term" value="C:ribonuclease P complex"/>
    <property type="evidence" value="ECO:0007669"/>
    <property type="project" value="TreeGrafter"/>
</dbReference>
<dbReference type="GO" id="GO:0042781">
    <property type="term" value="F:3'-tRNA processing endoribonuclease activity"/>
    <property type="evidence" value="ECO:0007669"/>
    <property type="project" value="TreeGrafter"/>
</dbReference>
<dbReference type="GO" id="GO:0004526">
    <property type="term" value="F:ribonuclease P activity"/>
    <property type="evidence" value="ECO:0007669"/>
    <property type="project" value="UniProtKB-UniRule"/>
</dbReference>
<dbReference type="GO" id="GO:0000049">
    <property type="term" value="F:tRNA binding"/>
    <property type="evidence" value="ECO:0007669"/>
    <property type="project" value="UniProtKB-UniRule"/>
</dbReference>
<dbReference type="GO" id="GO:0001682">
    <property type="term" value="P:tRNA 5'-leader removal"/>
    <property type="evidence" value="ECO:0007669"/>
    <property type="project" value="UniProtKB-UniRule"/>
</dbReference>
<dbReference type="Gene3D" id="3.30.230.10">
    <property type="match status" value="1"/>
</dbReference>
<dbReference type="HAMAP" id="MF_00227">
    <property type="entry name" value="RNase_P"/>
    <property type="match status" value="1"/>
</dbReference>
<dbReference type="InterPro" id="IPR020568">
    <property type="entry name" value="Ribosomal_Su5_D2-typ_SF"/>
</dbReference>
<dbReference type="InterPro" id="IPR014721">
    <property type="entry name" value="Ribsml_uS5_D2-typ_fold_subgr"/>
</dbReference>
<dbReference type="InterPro" id="IPR000100">
    <property type="entry name" value="RNase_P"/>
</dbReference>
<dbReference type="NCBIfam" id="TIGR00188">
    <property type="entry name" value="rnpA"/>
    <property type="match status" value="1"/>
</dbReference>
<dbReference type="PANTHER" id="PTHR33992">
    <property type="entry name" value="RIBONUCLEASE P PROTEIN COMPONENT"/>
    <property type="match status" value="1"/>
</dbReference>
<dbReference type="PANTHER" id="PTHR33992:SF1">
    <property type="entry name" value="RIBONUCLEASE P PROTEIN COMPONENT"/>
    <property type="match status" value="1"/>
</dbReference>
<dbReference type="Pfam" id="PF00825">
    <property type="entry name" value="Ribonuclease_P"/>
    <property type="match status" value="1"/>
</dbReference>
<dbReference type="SUPFAM" id="SSF54211">
    <property type="entry name" value="Ribosomal protein S5 domain 2-like"/>
    <property type="match status" value="1"/>
</dbReference>